<sequence length="422" mass="47101">MMMKLLFLIALFGCVVNSIRINNDNGLSFQSNCLGGSIQIAESIPLALNLQSNLSTHDAWMELITNAKKSIDMGIFYMTLTDGGQLDPVYGGQLGLDIYKALVDANSRGVSIRIVQNQPSSSMPDTDTQNLAKLGVQVRSINWPSLVGAGILHTKVIVVDQVSAYLGSANLDWRSLAQVKELGVLFQNCPSMVSDTEIAFQQYWDAAVVTELPSDWGVQYQAAYNQTNMASLLLNGNEKFEMFLAVSPPQFVSTDRTGDIDALVSAMNGATKTICISVMDYIPASLYNSPNTFWPVMDNALRAAAYNRGVQVRMLISHWNHTNYAIPQWLHSLDQVNNIDVRWFVVPDFPNEPQVPFTRVNHAKYMVTDEQSYVGTSNWSEDYYTNTGGLSYNIYNDEFTSQLQSIFDRDWNSPYSFPVTTY</sequence>
<name>PLDZ_DICDI</name>
<feature type="signal peptide" evidence="2">
    <location>
        <begin position="1"/>
        <end position="18"/>
    </location>
</feature>
<feature type="chain" id="PRO_0000367474" description="Phospholipase D Z">
    <location>
        <begin position="19"/>
        <end position="422"/>
    </location>
</feature>
<feature type="domain" description="PLD phosphodiesterase 1" evidence="3">
    <location>
        <begin position="148"/>
        <end position="175"/>
    </location>
</feature>
<feature type="domain" description="PLD phosphodiesterase 2" evidence="3">
    <location>
        <begin position="357"/>
        <end position="383"/>
    </location>
</feature>
<feature type="active site" evidence="3">
    <location>
        <position position="153"/>
    </location>
</feature>
<feature type="active site" evidence="3">
    <location>
        <position position="155"/>
    </location>
</feature>
<feature type="active site" evidence="3">
    <location>
        <position position="160"/>
    </location>
</feature>
<feature type="active site" evidence="3">
    <location>
        <position position="362"/>
    </location>
</feature>
<feature type="active site" evidence="3">
    <location>
        <position position="364"/>
    </location>
</feature>
<feature type="active site" evidence="3">
    <location>
        <position position="369"/>
    </location>
</feature>
<feature type="glycosylation site" description="N-linked (GlcNAc...) asparagine" evidence="2">
    <location>
        <position position="53"/>
    </location>
</feature>
<feature type="glycosylation site" description="N-linked (GlcNAc...) asparagine" evidence="2">
    <location>
        <position position="225"/>
    </location>
</feature>
<feature type="glycosylation site" description="N-linked (GlcNAc...) asparagine" evidence="2">
    <location>
        <position position="320"/>
    </location>
</feature>
<feature type="glycosylation site" description="N-linked (GlcNAc...) asparagine" evidence="2">
    <location>
        <position position="378"/>
    </location>
</feature>
<proteinExistence type="inferred from homology"/>
<protein>
    <recommendedName>
        <fullName>Phospholipase D Z</fullName>
        <ecNumber>3.1.4.4</ecNumber>
    </recommendedName>
    <alternativeName>
        <fullName>Phosphatase D3</fullName>
        <shortName>PLD 3</shortName>
    </alternativeName>
</protein>
<reference key="1">
    <citation type="journal article" date="2005" name="Nature">
        <title>The genome of the social amoeba Dictyostelium discoideum.</title>
        <authorList>
            <person name="Eichinger L."/>
            <person name="Pachebat J.A."/>
            <person name="Gloeckner G."/>
            <person name="Rajandream M.A."/>
            <person name="Sucgang R."/>
            <person name="Berriman M."/>
            <person name="Song J."/>
            <person name="Olsen R."/>
            <person name="Szafranski K."/>
            <person name="Xu Q."/>
            <person name="Tunggal B."/>
            <person name="Kummerfeld S."/>
            <person name="Madera M."/>
            <person name="Konfortov B.A."/>
            <person name="Rivero F."/>
            <person name="Bankier A.T."/>
            <person name="Lehmann R."/>
            <person name="Hamlin N."/>
            <person name="Davies R."/>
            <person name="Gaudet P."/>
            <person name="Fey P."/>
            <person name="Pilcher K."/>
            <person name="Chen G."/>
            <person name="Saunders D."/>
            <person name="Sodergren E.J."/>
            <person name="Davis P."/>
            <person name="Kerhornou A."/>
            <person name="Nie X."/>
            <person name="Hall N."/>
            <person name="Anjard C."/>
            <person name="Hemphill L."/>
            <person name="Bason N."/>
            <person name="Farbrother P."/>
            <person name="Desany B."/>
            <person name="Just E."/>
            <person name="Morio T."/>
            <person name="Rost R."/>
            <person name="Churcher C.M."/>
            <person name="Cooper J."/>
            <person name="Haydock S."/>
            <person name="van Driessche N."/>
            <person name="Cronin A."/>
            <person name="Goodhead I."/>
            <person name="Muzny D.M."/>
            <person name="Mourier T."/>
            <person name="Pain A."/>
            <person name="Lu M."/>
            <person name="Harper D."/>
            <person name="Lindsay R."/>
            <person name="Hauser H."/>
            <person name="James K.D."/>
            <person name="Quiles M."/>
            <person name="Madan Babu M."/>
            <person name="Saito T."/>
            <person name="Buchrieser C."/>
            <person name="Wardroper A."/>
            <person name="Felder M."/>
            <person name="Thangavelu M."/>
            <person name="Johnson D."/>
            <person name="Knights A."/>
            <person name="Loulseged H."/>
            <person name="Mungall K.L."/>
            <person name="Oliver K."/>
            <person name="Price C."/>
            <person name="Quail M.A."/>
            <person name="Urushihara H."/>
            <person name="Hernandez J."/>
            <person name="Rabbinowitsch E."/>
            <person name="Steffen D."/>
            <person name="Sanders M."/>
            <person name="Ma J."/>
            <person name="Kohara Y."/>
            <person name="Sharp S."/>
            <person name="Simmonds M.N."/>
            <person name="Spiegler S."/>
            <person name="Tivey A."/>
            <person name="Sugano S."/>
            <person name="White B."/>
            <person name="Walker D."/>
            <person name="Woodward J.R."/>
            <person name="Winckler T."/>
            <person name="Tanaka Y."/>
            <person name="Shaulsky G."/>
            <person name="Schleicher M."/>
            <person name="Weinstock G.M."/>
            <person name="Rosenthal A."/>
            <person name="Cox E.C."/>
            <person name="Chisholm R.L."/>
            <person name="Gibbs R.A."/>
            <person name="Loomis W.F."/>
            <person name="Platzer M."/>
            <person name="Kay R.R."/>
            <person name="Williams J.G."/>
            <person name="Dear P.H."/>
            <person name="Noegel A.A."/>
            <person name="Barrell B.G."/>
            <person name="Kuspa A."/>
        </authorList>
    </citation>
    <scope>NUCLEOTIDE SEQUENCE [LARGE SCALE GENOMIC DNA]</scope>
    <source>
        <strain>AX4</strain>
    </source>
</reference>
<dbReference type="EC" id="3.1.4.4"/>
<dbReference type="EMBL" id="AAFI02000047">
    <property type="protein sequence ID" value="EAL66149.1"/>
    <property type="molecule type" value="Genomic_DNA"/>
</dbReference>
<dbReference type="RefSeq" id="XP_640138.1">
    <property type="nucleotide sequence ID" value="XM_635046.1"/>
</dbReference>
<dbReference type="SMR" id="Q54SA1"/>
<dbReference type="FunCoup" id="Q54SA1">
    <property type="interactions" value="3"/>
</dbReference>
<dbReference type="STRING" id="44689.Q54SA1"/>
<dbReference type="GlyCosmos" id="Q54SA1">
    <property type="glycosylation" value="4 sites, No reported glycans"/>
</dbReference>
<dbReference type="GlyGen" id="Q54SA1">
    <property type="glycosylation" value="4 sites"/>
</dbReference>
<dbReference type="PaxDb" id="44689-DDB0231505"/>
<dbReference type="EnsemblProtists" id="EAL66149">
    <property type="protein sequence ID" value="EAL66149"/>
    <property type="gene ID" value="DDB_G0282579"/>
</dbReference>
<dbReference type="GeneID" id="8623675"/>
<dbReference type="KEGG" id="ddi:DDB_G0282579"/>
<dbReference type="dictyBase" id="DDB_G0282579">
    <property type="gene designation" value="pldZ"/>
</dbReference>
<dbReference type="VEuPathDB" id="AmoebaDB:DDB_G0282579"/>
<dbReference type="eggNOG" id="KOG3603">
    <property type="taxonomic scope" value="Eukaryota"/>
</dbReference>
<dbReference type="HOGENOM" id="CLU_027021_0_0_1"/>
<dbReference type="InParanoid" id="Q54SA1"/>
<dbReference type="OMA" id="WTHFIPN"/>
<dbReference type="PhylomeDB" id="Q54SA1"/>
<dbReference type="Reactome" id="R-DDI-1855204">
    <property type="pathway name" value="Synthesis of IP3 and IP4 in the cytosol"/>
</dbReference>
<dbReference type="Reactome" id="R-DDI-2029485">
    <property type="pathway name" value="Role of phospholipids in phagocytosis"/>
</dbReference>
<dbReference type="PRO" id="PR:Q54SA1"/>
<dbReference type="Proteomes" id="UP000002195">
    <property type="component" value="Chromosome 3"/>
</dbReference>
<dbReference type="GO" id="GO:0004630">
    <property type="term" value="F:phospholipase D activity"/>
    <property type="evidence" value="ECO:0007669"/>
    <property type="project" value="UniProtKB-EC"/>
</dbReference>
<dbReference type="GO" id="GO:0016042">
    <property type="term" value="P:lipid catabolic process"/>
    <property type="evidence" value="ECO:0007669"/>
    <property type="project" value="UniProtKB-KW"/>
</dbReference>
<dbReference type="CDD" id="cd09106">
    <property type="entry name" value="PLDc_vPLD3_4_5_like_1"/>
    <property type="match status" value="1"/>
</dbReference>
<dbReference type="CDD" id="cd09107">
    <property type="entry name" value="PLDc_vPLD3_4_5_like_2"/>
    <property type="match status" value="1"/>
</dbReference>
<dbReference type="Gene3D" id="3.30.870.10">
    <property type="entry name" value="Endonuclease Chain A"/>
    <property type="match status" value="2"/>
</dbReference>
<dbReference type="InterPro" id="IPR050874">
    <property type="entry name" value="Diverse_PLD-related"/>
</dbReference>
<dbReference type="InterPro" id="IPR032803">
    <property type="entry name" value="PLDc_3"/>
</dbReference>
<dbReference type="InterPro" id="IPR001736">
    <property type="entry name" value="PLipase_D/transphosphatidylase"/>
</dbReference>
<dbReference type="PANTHER" id="PTHR10185:SF17">
    <property type="entry name" value="GM01519P-RELATED"/>
    <property type="match status" value="1"/>
</dbReference>
<dbReference type="PANTHER" id="PTHR10185">
    <property type="entry name" value="PHOSPHOLIPASE D - RELATED"/>
    <property type="match status" value="1"/>
</dbReference>
<dbReference type="Pfam" id="PF00614">
    <property type="entry name" value="PLDc"/>
    <property type="match status" value="1"/>
</dbReference>
<dbReference type="Pfam" id="PF13918">
    <property type="entry name" value="PLDc_3"/>
    <property type="match status" value="1"/>
</dbReference>
<dbReference type="SMART" id="SM00155">
    <property type="entry name" value="PLDc"/>
    <property type="match status" value="2"/>
</dbReference>
<dbReference type="SUPFAM" id="SSF56024">
    <property type="entry name" value="Phospholipase D/nuclease"/>
    <property type="match status" value="2"/>
</dbReference>
<dbReference type="PROSITE" id="PS50035">
    <property type="entry name" value="PLD"/>
    <property type="match status" value="2"/>
</dbReference>
<comment type="function">
    <text evidence="1">Hydrolyzes membrane phospholipids, such as PtdCho (phosphatidylcholine), producing the free headgroup and PtdOH (phosphatidic acid; signaling molecule on its own).</text>
</comment>
<comment type="catalytic activity">
    <reaction>
        <text>a 1,2-diacyl-sn-glycero-3-phosphocholine + H2O = a 1,2-diacyl-sn-glycero-3-phosphate + choline + H(+)</text>
        <dbReference type="Rhea" id="RHEA:14445"/>
        <dbReference type="ChEBI" id="CHEBI:15354"/>
        <dbReference type="ChEBI" id="CHEBI:15377"/>
        <dbReference type="ChEBI" id="CHEBI:15378"/>
        <dbReference type="ChEBI" id="CHEBI:57643"/>
        <dbReference type="ChEBI" id="CHEBI:58608"/>
        <dbReference type="EC" id="3.1.4.4"/>
    </reaction>
</comment>
<comment type="activity regulation">
    <text>Inhibited by butan-1-ol.</text>
</comment>
<comment type="similarity">
    <text evidence="4">Belongs to the phospholipase D family.</text>
</comment>
<accession>Q54SA1</accession>
<gene>
    <name type="primary">pldZ</name>
    <name type="synonym">pld3</name>
    <name type="ORF">DDB_G0282579</name>
</gene>
<evidence type="ECO:0000250" key="1"/>
<evidence type="ECO:0000255" key="2"/>
<evidence type="ECO:0000255" key="3">
    <source>
        <dbReference type="PROSITE-ProRule" id="PRU00153"/>
    </source>
</evidence>
<evidence type="ECO:0000305" key="4"/>
<organism>
    <name type="scientific">Dictyostelium discoideum</name>
    <name type="common">Social amoeba</name>
    <dbReference type="NCBI Taxonomy" id="44689"/>
    <lineage>
        <taxon>Eukaryota</taxon>
        <taxon>Amoebozoa</taxon>
        <taxon>Evosea</taxon>
        <taxon>Eumycetozoa</taxon>
        <taxon>Dictyostelia</taxon>
        <taxon>Dictyosteliales</taxon>
        <taxon>Dictyosteliaceae</taxon>
        <taxon>Dictyostelium</taxon>
    </lineage>
</organism>
<keyword id="KW-0325">Glycoprotein</keyword>
<keyword id="KW-0378">Hydrolase</keyword>
<keyword id="KW-0442">Lipid degradation</keyword>
<keyword id="KW-0443">Lipid metabolism</keyword>
<keyword id="KW-1185">Reference proteome</keyword>
<keyword id="KW-0677">Repeat</keyword>
<keyword id="KW-0732">Signal</keyword>